<feature type="chain" id="PRO_0000197980" description="Bis(5'-nucleosyl)-tetraphosphatase, symmetrical">
    <location>
        <begin position="1"/>
        <end position="277"/>
    </location>
</feature>
<comment type="function">
    <text evidence="1">Hydrolyzes diadenosine 5',5'''-P1,P4-tetraphosphate to yield ADP.</text>
</comment>
<comment type="catalytic activity">
    <reaction evidence="1">
        <text>P(1),P(4)-bis(5'-adenosyl) tetraphosphate + H2O = 2 ADP + 2 H(+)</text>
        <dbReference type="Rhea" id="RHEA:24252"/>
        <dbReference type="ChEBI" id="CHEBI:15377"/>
        <dbReference type="ChEBI" id="CHEBI:15378"/>
        <dbReference type="ChEBI" id="CHEBI:58141"/>
        <dbReference type="ChEBI" id="CHEBI:456216"/>
        <dbReference type="EC" id="3.6.1.41"/>
    </reaction>
</comment>
<comment type="similarity">
    <text evidence="1">Belongs to the Ap4A hydrolase family.</text>
</comment>
<dbReference type="EC" id="3.6.1.41" evidence="1"/>
<dbReference type="EMBL" id="BX640411">
    <property type="protein sequence ID" value="CAE40701.1"/>
    <property type="molecule type" value="Genomic_DNA"/>
</dbReference>
<dbReference type="RefSeq" id="NP_879199.1">
    <property type="nucleotide sequence ID" value="NC_002929.2"/>
</dbReference>
<dbReference type="RefSeq" id="WP_010929738.1">
    <property type="nucleotide sequence ID" value="NZ_CP039022.1"/>
</dbReference>
<dbReference type="SMR" id="Q7W041"/>
<dbReference type="STRING" id="257313.BP0324"/>
<dbReference type="PaxDb" id="257313-BP0324"/>
<dbReference type="KEGG" id="bpe:BP0324"/>
<dbReference type="PATRIC" id="fig|257313.5.peg.351"/>
<dbReference type="eggNOG" id="COG0639">
    <property type="taxonomic scope" value="Bacteria"/>
</dbReference>
<dbReference type="HOGENOM" id="CLU_056184_1_0_4"/>
<dbReference type="Proteomes" id="UP000002676">
    <property type="component" value="Chromosome"/>
</dbReference>
<dbReference type="GO" id="GO:0008803">
    <property type="term" value="F:bis(5'-nucleosyl)-tetraphosphatase (symmetrical) activity"/>
    <property type="evidence" value="ECO:0007669"/>
    <property type="project" value="UniProtKB-UniRule"/>
</dbReference>
<dbReference type="CDD" id="cd07422">
    <property type="entry name" value="MPP_ApaH"/>
    <property type="match status" value="1"/>
</dbReference>
<dbReference type="Gene3D" id="3.60.21.10">
    <property type="match status" value="1"/>
</dbReference>
<dbReference type="HAMAP" id="MF_00199">
    <property type="entry name" value="ApaH"/>
    <property type="match status" value="1"/>
</dbReference>
<dbReference type="InterPro" id="IPR004617">
    <property type="entry name" value="ApaH"/>
</dbReference>
<dbReference type="InterPro" id="IPR004843">
    <property type="entry name" value="Calcineurin-like_PHP_ApaH"/>
</dbReference>
<dbReference type="InterPro" id="IPR029052">
    <property type="entry name" value="Metallo-depent_PP-like"/>
</dbReference>
<dbReference type="NCBIfam" id="TIGR00668">
    <property type="entry name" value="apaH"/>
    <property type="match status" value="1"/>
</dbReference>
<dbReference type="NCBIfam" id="NF001204">
    <property type="entry name" value="PRK00166.1"/>
    <property type="match status" value="1"/>
</dbReference>
<dbReference type="PANTHER" id="PTHR40942">
    <property type="match status" value="1"/>
</dbReference>
<dbReference type="PANTHER" id="PTHR40942:SF4">
    <property type="entry name" value="CYTOCHROME C5"/>
    <property type="match status" value="1"/>
</dbReference>
<dbReference type="Pfam" id="PF00149">
    <property type="entry name" value="Metallophos"/>
    <property type="match status" value="1"/>
</dbReference>
<dbReference type="PIRSF" id="PIRSF000903">
    <property type="entry name" value="B5n-ttraPtase_sm"/>
    <property type="match status" value="1"/>
</dbReference>
<dbReference type="SUPFAM" id="SSF56300">
    <property type="entry name" value="Metallo-dependent phosphatases"/>
    <property type="match status" value="1"/>
</dbReference>
<name>APAH_BORPE</name>
<proteinExistence type="inferred from homology"/>
<keyword id="KW-0378">Hydrolase</keyword>
<keyword id="KW-1185">Reference proteome</keyword>
<accession>Q7W041</accession>
<sequence>MKGNIWTIGDVQGCCAPLAELLAHPEIAGDTDSRFWFAGDLVNRGPQSLAVLRRIMAMGERCTAVLGNHDLHLLAAYAGVRKPSKSDTLDEVLQAPDAVDLIDWLRFRPLAHYEAGHLMVHAGVLAKWDVAKTLALAGEVEQALRGPNWRKALQKMYGNEPATWKDDHTGGKRMRVIINALTRIRLCTPSGHMEFATKVAPGAWPAGLVPWFDVPNRATRDVTVVFGHWSTLGLLMRPDVICLDTGCVWGGALSALRLHDRKLVQVKCKRFQDPNGD</sequence>
<evidence type="ECO:0000255" key="1">
    <source>
        <dbReference type="HAMAP-Rule" id="MF_00199"/>
    </source>
</evidence>
<organism>
    <name type="scientific">Bordetella pertussis (strain Tohama I / ATCC BAA-589 / NCTC 13251)</name>
    <dbReference type="NCBI Taxonomy" id="257313"/>
    <lineage>
        <taxon>Bacteria</taxon>
        <taxon>Pseudomonadati</taxon>
        <taxon>Pseudomonadota</taxon>
        <taxon>Betaproteobacteria</taxon>
        <taxon>Burkholderiales</taxon>
        <taxon>Alcaligenaceae</taxon>
        <taxon>Bordetella</taxon>
    </lineage>
</organism>
<gene>
    <name evidence="1" type="primary">apaH</name>
    <name type="ordered locus">BP0324</name>
</gene>
<protein>
    <recommendedName>
        <fullName evidence="1">Bis(5'-nucleosyl)-tetraphosphatase, symmetrical</fullName>
        <ecNumber evidence="1">3.6.1.41</ecNumber>
    </recommendedName>
    <alternativeName>
        <fullName evidence="1">Ap4A hydrolase</fullName>
    </alternativeName>
    <alternativeName>
        <fullName evidence="1">Diadenosine 5',5'''-P1,P4-tetraphosphate pyrophosphohydrolase</fullName>
    </alternativeName>
    <alternativeName>
        <fullName evidence="1">Diadenosine tetraphosphatase</fullName>
    </alternativeName>
</protein>
<reference key="1">
    <citation type="journal article" date="2003" name="Nat. Genet.">
        <title>Comparative analysis of the genome sequences of Bordetella pertussis, Bordetella parapertussis and Bordetella bronchiseptica.</title>
        <authorList>
            <person name="Parkhill J."/>
            <person name="Sebaihia M."/>
            <person name="Preston A."/>
            <person name="Murphy L.D."/>
            <person name="Thomson N.R."/>
            <person name="Harris D.E."/>
            <person name="Holden M.T.G."/>
            <person name="Churcher C.M."/>
            <person name="Bentley S.D."/>
            <person name="Mungall K.L."/>
            <person name="Cerdeno-Tarraga A.-M."/>
            <person name="Temple L."/>
            <person name="James K.D."/>
            <person name="Harris B."/>
            <person name="Quail M.A."/>
            <person name="Achtman M."/>
            <person name="Atkin R."/>
            <person name="Baker S."/>
            <person name="Basham D."/>
            <person name="Bason N."/>
            <person name="Cherevach I."/>
            <person name="Chillingworth T."/>
            <person name="Collins M."/>
            <person name="Cronin A."/>
            <person name="Davis P."/>
            <person name="Doggett J."/>
            <person name="Feltwell T."/>
            <person name="Goble A."/>
            <person name="Hamlin N."/>
            <person name="Hauser H."/>
            <person name="Holroyd S."/>
            <person name="Jagels K."/>
            <person name="Leather S."/>
            <person name="Moule S."/>
            <person name="Norberczak H."/>
            <person name="O'Neil S."/>
            <person name="Ormond D."/>
            <person name="Price C."/>
            <person name="Rabbinowitsch E."/>
            <person name="Rutter S."/>
            <person name="Sanders M."/>
            <person name="Saunders D."/>
            <person name="Seeger K."/>
            <person name="Sharp S."/>
            <person name="Simmonds M."/>
            <person name="Skelton J."/>
            <person name="Squares R."/>
            <person name="Squares S."/>
            <person name="Stevens K."/>
            <person name="Unwin L."/>
            <person name="Whitehead S."/>
            <person name="Barrell B.G."/>
            <person name="Maskell D.J."/>
        </authorList>
    </citation>
    <scope>NUCLEOTIDE SEQUENCE [LARGE SCALE GENOMIC DNA]</scope>
    <source>
        <strain>Tohama I / ATCC BAA-589 / NCTC 13251</strain>
    </source>
</reference>